<protein>
    <recommendedName>
        <fullName evidence="1">N-acetylneuraminate lyase</fullName>
        <shortName evidence="1">NAL</shortName>
        <shortName evidence="1">Neu5Ac lyase</shortName>
        <ecNumber evidence="1">4.1.3.3</ecNumber>
    </recommendedName>
    <alternativeName>
        <fullName evidence="1">N-acetylneuraminate pyruvate-lyase</fullName>
    </alternativeName>
    <alternativeName>
        <fullName evidence="1">N-acetylneuraminic acid aldolase</fullName>
    </alternativeName>
    <alternativeName>
        <fullName evidence="1">Sialate lyase</fullName>
    </alternativeName>
    <alternativeName>
        <fullName evidence="1">Sialic acid aldolase</fullName>
    </alternativeName>
    <alternativeName>
        <fullName evidence="1">Sialic acid lyase</fullName>
    </alternativeName>
</protein>
<proteinExistence type="inferred from homology"/>
<reference key="1">
    <citation type="journal article" date="2006" name="Genome Res.">
        <title>Skewed genomic variability in strains of the toxigenic bacterial pathogen, Clostridium perfringens.</title>
        <authorList>
            <person name="Myers G.S.A."/>
            <person name="Rasko D.A."/>
            <person name="Cheung J.K."/>
            <person name="Ravel J."/>
            <person name="Seshadri R."/>
            <person name="DeBoy R.T."/>
            <person name="Ren Q."/>
            <person name="Varga J."/>
            <person name="Awad M.M."/>
            <person name="Brinkac L.M."/>
            <person name="Daugherty S.C."/>
            <person name="Haft D.H."/>
            <person name="Dodson R.J."/>
            <person name="Madupu R."/>
            <person name="Nelson W.C."/>
            <person name="Rosovitz M.J."/>
            <person name="Sullivan S.A."/>
            <person name="Khouri H."/>
            <person name="Dimitrov G.I."/>
            <person name="Watkins K.L."/>
            <person name="Mulligan S."/>
            <person name="Benton J."/>
            <person name="Radune D."/>
            <person name="Fisher D.J."/>
            <person name="Atkins H.S."/>
            <person name="Hiscox T."/>
            <person name="Jost B.H."/>
            <person name="Billington S.J."/>
            <person name="Songer J.G."/>
            <person name="McClane B.A."/>
            <person name="Titball R.W."/>
            <person name="Rood J.I."/>
            <person name="Melville S.B."/>
            <person name="Paulsen I.T."/>
        </authorList>
    </citation>
    <scope>NUCLEOTIDE SEQUENCE [LARGE SCALE GENOMIC DNA]</scope>
    <source>
        <strain>SM101 / Type A</strain>
    </source>
</reference>
<dbReference type="EC" id="4.1.3.3" evidence="1"/>
<dbReference type="EMBL" id="CP000312">
    <property type="protein sequence ID" value="ABG85625.1"/>
    <property type="molecule type" value="Genomic_DNA"/>
</dbReference>
<dbReference type="RefSeq" id="WP_011591326.1">
    <property type="nucleotide sequence ID" value="NC_008262.1"/>
</dbReference>
<dbReference type="SMR" id="Q0SWI8"/>
<dbReference type="KEGG" id="cpr:CPR_0175"/>
<dbReference type="UniPathway" id="UPA00629">
    <property type="reaction ID" value="UER00680"/>
</dbReference>
<dbReference type="Proteomes" id="UP000001824">
    <property type="component" value="Chromosome"/>
</dbReference>
<dbReference type="GO" id="GO:0005829">
    <property type="term" value="C:cytosol"/>
    <property type="evidence" value="ECO:0007669"/>
    <property type="project" value="TreeGrafter"/>
</dbReference>
<dbReference type="GO" id="GO:0008747">
    <property type="term" value="F:N-acetylneuraminate lyase activity"/>
    <property type="evidence" value="ECO:0007669"/>
    <property type="project" value="UniProtKB-UniRule"/>
</dbReference>
<dbReference type="GO" id="GO:0005975">
    <property type="term" value="P:carbohydrate metabolic process"/>
    <property type="evidence" value="ECO:0007669"/>
    <property type="project" value="UniProtKB-UniRule"/>
</dbReference>
<dbReference type="GO" id="GO:0019262">
    <property type="term" value="P:N-acetylneuraminate catabolic process"/>
    <property type="evidence" value="ECO:0007669"/>
    <property type="project" value="UniProtKB-UniRule"/>
</dbReference>
<dbReference type="CDD" id="cd00954">
    <property type="entry name" value="NAL"/>
    <property type="match status" value="1"/>
</dbReference>
<dbReference type="Gene3D" id="3.20.20.70">
    <property type="entry name" value="Aldolase class I"/>
    <property type="match status" value="1"/>
</dbReference>
<dbReference type="HAMAP" id="MF_01237">
    <property type="entry name" value="N_acetylneuram_lyase"/>
    <property type="match status" value="1"/>
</dbReference>
<dbReference type="InterPro" id="IPR013785">
    <property type="entry name" value="Aldolase_TIM"/>
</dbReference>
<dbReference type="InterPro" id="IPR002220">
    <property type="entry name" value="DapA-like"/>
</dbReference>
<dbReference type="InterPro" id="IPR005264">
    <property type="entry name" value="NanA"/>
</dbReference>
<dbReference type="InterPro" id="IPR020625">
    <property type="entry name" value="Schiff_base-form_aldolases_AS"/>
</dbReference>
<dbReference type="InterPro" id="IPR020624">
    <property type="entry name" value="Schiff_base-form_aldolases_CS"/>
</dbReference>
<dbReference type="NCBIfam" id="TIGR00683">
    <property type="entry name" value="nanA"/>
    <property type="match status" value="1"/>
</dbReference>
<dbReference type="NCBIfam" id="NF003164">
    <property type="entry name" value="PRK04147.1"/>
    <property type="match status" value="1"/>
</dbReference>
<dbReference type="PANTHER" id="PTHR42849">
    <property type="entry name" value="N-ACETYLNEURAMINATE LYASE"/>
    <property type="match status" value="1"/>
</dbReference>
<dbReference type="PANTHER" id="PTHR42849:SF1">
    <property type="entry name" value="N-ACETYLNEURAMINATE LYASE"/>
    <property type="match status" value="1"/>
</dbReference>
<dbReference type="Pfam" id="PF00701">
    <property type="entry name" value="DHDPS"/>
    <property type="match status" value="1"/>
</dbReference>
<dbReference type="PIRSF" id="PIRSF001365">
    <property type="entry name" value="DHDPS"/>
    <property type="match status" value="1"/>
</dbReference>
<dbReference type="PRINTS" id="PR00146">
    <property type="entry name" value="DHPICSNTHASE"/>
</dbReference>
<dbReference type="SMART" id="SM01130">
    <property type="entry name" value="DHDPS"/>
    <property type="match status" value="1"/>
</dbReference>
<dbReference type="SUPFAM" id="SSF51569">
    <property type="entry name" value="Aldolase"/>
    <property type="match status" value="1"/>
</dbReference>
<dbReference type="PROSITE" id="PS00665">
    <property type="entry name" value="DHDPS_1"/>
    <property type="match status" value="1"/>
</dbReference>
<dbReference type="PROSITE" id="PS00666">
    <property type="entry name" value="DHDPS_2"/>
    <property type="match status" value="1"/>
</dbReference>
<accession>Q0SWI8</accession>
<keyword id="KW-0119">Carbohydrate metabolism</keyword>
<keyword id="KW-0963">Cytoplasm</keyword>
<keyword id="KW-0456">Lyase</keyword>
<keyword id="KW-0704">Schiff base</keyword>
<name>NANA_CLOPS</name>
<organism>
    <name type="scientific">Clostridium perfringens (strain SM101 / Type A)</name>
    <dbReference type="NCBI Taxonomy" id="289380"/>
    <lineage>
        <taxon>Bacteria</taxon>
        <taxon>Bacillati</taxon>
        <taxon>Bacillota</taxon>
        <taxon>Clostridia</taxon>
        <taxon>Eubacteriales</taxon>
        <taxon>Clostridiaceae</taxon>
        <taxon>Clostridium</taxon>
    </lineage>
</organism>
<comment type="function">
    <text evidence="1">Catalyzes the reversible aldol cleavage of N-acetylneuraminic acid (sialic acid; Neu5Ac) to form pyruvate and N-acetylmannosamine (ManNAc) via a Schiff base intermediate.</text>
</comment>
<comment type="catalytic activity">
    <reaction evidence="1">
        <text>aceneuramate = aldehydo-N-acetyl-D-mannosamine + pyruvate</text>
        <dbReference type="Rhea" id="RHEA:23296"/>
        <dbReference type="ChEBI" id="CHEBI:15361"/>
        <dbReference type="ChEBI" id="CHEBI:17122"/>
        <dbReference type="ChEBI" id="CHEBI:173083"/>
        <dbReference type="EC" id="4.1.3.3"/>
    </reaction>
</comment>
<comment type="pathway">
    <text evidence="1">Amino-sugar metabolism; N-acetylneuraminate degradation; D-fructose 6-phosphate from N-acetylneuraminate: step 1/5.</text>
</comment>
<comment type="subunit">
    <text evidence="1">Homotetramer.</text>
</comment>
<comment type="subcellular location">
    <subcellularLocation>
        <location evidence="1">Cytoplasm</location>
    </subcellularLocation>
</comment>
<comment type="similarity">
    <text evidence="1">Belongs to the DapA family. NanA subfamily.</text>
</comment>
<gene>
    <name evidence="1" type="primary">nanA</name>
    <name type="ordered locus">CPR_0175</name>
</gene>
<evidence type="ECO:0000255" key="1">
    <source>
        <dbReference type="HAMAP-Rule" id="MF_01237"/>
    </source>
</evidence>
<feature type="chain" id="PRO_1000066922" description="N-acetylneuraminate lyase">
    <location>
        <begin position="1"/>
        <end position="288"/>
    </location>
</feature>
<feature type="active site" description="Proton donor" evidence="1">
    <location>
        <position position="133"/>
    </location>
</feature>
<feature type="active site" description="Schiff-base intermediate with substrate" evidence="1">
    <location>
        <position position="161"/>
    </location>
</feature>
<feature type="binding site" evidence="1">
    <location>
        <position position="44"/>
    </location>
    <ligand>
        <name>aceneuramate</name>
        <dbReference type="ChEBI" id="CHEBI:173083"/>
    </ligand>
</feature>
<feature type="binding site" evidence="1">
    <location>
        <position position="45"/>
    </location>
    <ligand>
        <name>aceneuramate</name>
        <dbReference type="ChEBI" id="CHEBI:173083"/>
    </ligand>
</feature>
<feature type="binding site" evidence="1">
    <location>
        <position position="163"/>
    </location>
    <ligand>
        <name>aceneuramate</name>
        <dbReference type="ChEBI" id="CHEBI:173083"/>
    </ligand>
</feature>
<feature type="binding site" evidence="1">
    <location>
        <position position="185"/>
    </location>
    <ligand>
        <name>aceneuramate</name>
        <dbReference type="ChEBI" id="CHEBI:173083"/>
    </ligand>
</feature>
<feature type="binding site" evidence="1">
    <location>
        <position position="187"/>
    </location>
    <ligand>
        <name>aceneuramate</name>
        <dbReference type="ChEBI" id="CHEBI:173083"/>
    </ligand>
</feature>
<feature type="binding site" evidence="1">
    <location>
        <position position="188"/>
    </location>
    <ligand>
        <name>aceneuramate</name>
        <dbReference type="ChEBI" id="CHEBI:173083"/>
    </ligand>
</feature>
<feature type="binding site" evidence="1">
    <location>
        <position position="204"/>
    </location>
    <ligand>
        <name>aceneuramate</name>
        <dbReference type="ChEBI" id="CHEBI:173083"/>
    </ligand>
</feature>
<sequence length="288" mass="32459">MKGIYSALLVSFDKDGNINEKGLREIIRHNIDVCKIDGLYVGGSTGENFMLSTDEKKRIFEIAMDEAKGQVKLIAQVGSVNLKEAVELAKFTTDLGYDAISAVTPFYYKFDFNEIKHYYETIINSVDNKLIIYSIPFLTGVNMSIEQFAELFENDKIIGVKFTAADFYLLERMRKAFPDKLIFAGFDEMMLPATVLGVDGAIGSTFNVNGIRARQIFEAAQKGDIETALEVQHVTNDLITDILNNGLYQTIKLILQEQGVDAGYCRQPMKEATEEMIEKAKEINKKYF</sequence>